<organism>
    <name type="scientific">Cyanothece sp. (strain PCC 7425 / ATCC 29141)</name>
    <dbReference type="NCBI Taxonomy" id="395961"/>
    <lineage>
        <taxon>Bacteria</taxon>
        <taxon>Bacillati</taxon>
        <taxon>Cyanobacteriota</taxon>
        <taxon>Cyanophyceae</taxon>
        <taxon>Gomontiellales</taxon>
        <taxon>Cyanothecaceae</taxon>
        <taxon>Cyanothece</taxon>
    </lineage>
</organism>
<gene>
    <name evidence="1" type="primary">rplR</name>
    <name evidence="1" type="synonym">rpl18</name>
    <name type="ordered locus">Cyan7425_1307</name>
</gene>
<reference key="1">
    <citation type="journal article" date="2011" name="MBio">
        <title>Novel metabolic attributes of the genus Cyanothece, comprising a group of unicellular nitrogen-fixing Cyanobacteria.</title>
        <authorList>
            <person name="Bandyopadhyay A."/>
            <person name="Elvitigala T."/>
            <person name="Welsh E."/>
            <person name="Stockel J."/>
            <person name="Liberton M."/>
            <person name="Min H."/>
            <person name="Sherman L.A."/>
            <person name="Pakrasi H.B."/>
        </authorList>
    </citation>
    <scope>NUCLEOTIDE SEQUENCE [LARGE SCALE GENOMIC DNA]</scope>
    <source>
        <strain>PCC 7425 / ATCC 29141</strain>
    </source>
</reference>
<evidence type="ECO:0000255" key="1">
    <source>
        <dbReference type="HAMAP-Rule" id="MF_01337"/>
    </source>
</evidence>
<evidence type="ECO:0000256" key="2">
    <source>
        <dbReference type="SAM" id="MobiDB-lite"/>
    </source>
</evidence>
<evidence type="ECO:0000305" key="3"/>
<protein>
    <recommendedName>
        <fullName evidence="1">Large ribosomal subunit protein uL18</fullName>
    </recommendedName>
    <alternativeName>
        <fullName evidence="3">50S ribosomal protein L18</fullName>
    </alternativeName>
</protein>
<name>RL18_CYAP4</name>
<accession>B8HMR9</accession>
<keyword id="KW-0687">Ribonucleoprotein</keyword>
<keyword id="KW-0689">Ribosomal protein</keyword>
<keyword id="KW-0694">RNA-binding</keyword>
<keyword id="KW-0699">rRNA-binding</keyword>
<sequence length="120" mass="13414">MKLNRVESTRSRHRRVRRKVGGTGDRPRLAVFRSHQHIYAQVIDDQQQHTLVAASSLEPEFKTQYGEGDTCAASTQIGKLIAERSLAKGIQKVVFDRGGKLYHGRVKALAEAAREAGLEF</sequence>
<dbReference type="EMBL" id="CP001344">
    <property type="protein sequence ID" value="ACL43684.1"/>
    <property type="molecule type" value="Genomic_DNA"/>
</dbReference>
<dbReference type="SMR" id="B8HMR9"/>
<dbReference type="STRING" id="395961.Cyan7425_1307"/>
<dbReference type="KEGG" id="cyn:Cyan7425_1307"/>
<dbReference type="eggNOG" id="COG0256">
    <property type="taxonomic scope" value="Bacteria"/>
</dbReference>
<dbReference type="HOGENOM" id="CLU_098841_0_1_3"/>
<dbReference type="OrthoDB" id="9810939at2"/>
<dbReference type="GO" id="GO:0022625">
    <property type="term" value="C:cytosolic large ribosomal subunit"/>
    <property type="evidence" value="ECO:0007669"/>
    <property type="project" value="TreeGrafter"/>
</dbReference>
<dbReference type="GO" id="GO:0008097">
    <property type="term" value="F:5S rRNA binding"/>
    <property type="evidence" value="ECO:0007669"/>
    <property type="project" value="TreeGrafter"/>
</dbReference>
<dbReference type="GO" id="GO:0003735">
    <property type="term" value="F:structural constituent of ribosome"/>
    <property type="evidence" value="ECO:0007669"/>
    <property type="project" value="InterPro"/>
</dbReference>
<dbReference type="GO" id="GO:0006412">
    <property type="term" value="P:translation"/>
    <property type="evidence" value="ECO:0007669"/>
    <property type="project" value="UniProtKB-UniRule"/>
</dbReference>
<dbReference type="CDD" id="cd00432">
    <property type="entry name" value="Ribosomal_L18_L5e"/>
    <property type="match status" value="1"/>
</dbReference>
<dbReference type="FunFam" id="3.30.420.100:FF:000001">
    <property type="entry name" value="50S ribosomal protein L18"/>
    <property type="match status" value="1"/>
</dbReference>
<dbReference type="Gene3D" id="3.30.420.100">
    <property type="match status" value="1"/>
</dbReference>
<dbReference type="HAMAP" id="MF_01337_B">
    <property type="entry name" value="Ribosomal_uL18_B"/>
    <property type="match status" value="1"/>
</dbReference>
<dbReference type="InterPro" id="IPR004389">
    <property type="entry name" value="Ribosomal_uL18_bac-type"/>
</dbReference>
<dbReference type="InterPro" id="IPR005484">
    <property type="entry name" value="Ribosomal_uL18_bac/euk"/>
</dbReference>
<dbReference type="NCBIfam" id="TIGR00060">
    <property type="entry name" value="L18_bact"/>
    <property type="match status" value="1"/>
</dbReference>
<dbReference type="PANTHER" id="PTHR12899">
    <property type="entry name" value="39S RIBOSOMAL PROTEIN L18, MITOCHONDRIAL"/>
    <property type="match status" value="1"/>
</dbReference>
<dbReference type="PANTHER" id="PTHR12899:SF3">
    <property type="entry name" value="LARGE RIBOSOMAL SUBUNIT PROTEIN UL18M"/>
    <property type="match status" value="1"/>
</dbReference>
<dbReference type="Pfam" id="PF00861">
    <property type="entry name" value="Ribosomal_L18p"/>
    <property type="match status" value="1"/>
</dbReference>
<dbReference type="SUPFAM" id="SSF53137">
    <property type="entry name" value="Translational machinery components"/>
    <property type="match status" value="1"/>
</dbReference>
<comment type="function">
    <text evidence="1">This is one of the proteins that bind and probably mediate the attachment of the 5S RNA into the large ribosomal subunit, where it forms part of the central protuberance.</text>
</comment>
<comment type="subunit">
    <text evidence="1">Part of the 50S ribosomal subunit; part of the 5S rRNA/L5/L18/L25 subcomplex. Contacts the 5S and 23S rRNAs.</text>
</comment>
<comment type="similarity">
    <text evidence="1">Belongs to the universal ribosomal protein uL18 family.</text>
</comment>
<feature type="chain" id="PRO_1000166222" description="Large ribosomal subunit protein uL18">
    <location>
        <begin position="1"/>
        <end position="120"/>
    </location>
</feature>
<feature type="region of interest" description="Disordered" evidence="2">
    <location>
        <begin position="1"/>
        <end position="26"/>
    </location>
</feature>
<feature type="compositionally biased region" description="Basic and acidic residues" evidence="2">
    <location>
        <begin position="1"/>
        <end position="10"/>
    </location>
</feature>
<feature type="compositionally biased region" description="Basic residues" evidence="2">
    <location>
        <begin position="11"/>
        <end position="20"/>
    </location>
</feature>
<proteinExistence type="inferred from homology"/>